<organism>
    <name type="scientific">Escherichia coli (strain K12)</name>
    <dbReference type="NCBI Taxonomy" id="83333"/>
    <lineage>
        <taxon>Bacteria</taxon>
        <taxon>Pseudomonadati</taxon>
        <taxon>Pseudomonadota</taxon>
        <taxon>Gammaproteobacteria</taxon>
        <taxon>Enterobacterales</taxon>
        <taxon>Enterobacteriaceae</taxon>
        <taxon>Escherichia</taxon>
    </lineage>
</organism>
<accession>P71311</accession>
<accession>P75699</accession>
<accession>Q2MC61</accession>
<protein>
    <recommendedName>
        <fullName>Uncharacterized deacetylase YaiS</fullName>
        <ecNumber>3.-.-.-</ecNumber>
    </recommendedName>
</protein>
<gene>
    <name type="primary">yaiS</name>
    <name type="ordered locus">b0364</name>
    <name type="ordered locus">JW0356</name>
</gene>
<proteinExistence type="inferred from homology"/>
<evidence type="ECO:0000305" key="1"/>
<name>YAIS_ECOLI</name>
<comment type="similarity">
    <text evidence="1">Belongs to the PIGL family.</text>
</comment>
<sequence>MDKVLDSALLSSANKRKGILAIGAHPDDIELGCGASLARLAQKGIYIAAVVMTTGNSGTDGIIDRHEESRNALKILGCHQTIHLNFADTRAHLQLNDMISALEDIIKNQIPSDVEIMRVYTMHDADRHQDHLAVYQASMVACRTIPQILGYETPSTWLSFMPQVFESVKEEYFTVKLAALKKHKS</sequence>
<keyword id="KW-0378">Hydrolase</keyword>
<keyword id="KW-1185">Reference proteome</keyword>
<dbReference type="EC" id="3.-.-.-"/>
<dbReference type="EMBL" id="D85613">
    <property type="status" value="NOT_ANNOTATED_CDS"/>
    <property type="molecule type" value="Genomic_DNA"/>
</dbReference>
<dbReference type="EMBL" id="U73857">
    <property type="protein sequence ID" value="AAB18087.1"/>
    <property type="molecule type" value="Genomic_DNA"/>
</dbReference>
<dbReference type="EMBL" id="U00096">
    <property type="protein sequence ID" value="AAC73467.2"/>
    <property type="molecule type" value="Genomic_DNA"/>
</dbReference>
<dbReference type="EMBL" id="AP009048">
    <property type="protein sequence ID" value="BAE76145.1"/>
    <property type="molecule type" value="Genomic_DNA"/>
</dbReference>
<dbReference type="PIR" id="D64764">
    <property type="entry name" value="D64764"/>
</dbReference>
<dbReference type="RefSeq" id="NP_414898.4">
    <property type="nucleotide sequence ID" value="NC_000913.3"/>
</dbReference>
<dbReference type="SMR" id="P71311"/>
<dbReference type="BioGRID" id="4261089">
    <property type="interactions" value="194"/>
</dbReference>
<dbReference type="DIP" id="DIP-11278N"/>
<dbReference type="FunCoup" id="P71311">
    <property type="interactions" value="62"/>
</dbReference>
<dbReference type="STRING" id="511145.b0364"/>
<dbReference type="PaxDb" id="511145-b0364"/>
<dbReference type="EnsemblBacteria" id="AAC73467">
    <property type="protein sequence ID" value="AAC73467"/>
    <property type="gene ID" value="b0364"/>
</dbReference>
<dbReference type="GeneID" id="946967"/>
<dbReference type="KEGG" id="ecj:JW0356"/>
<dbReference type="KEGG" id="eco:b0364"/>
<dbReference type="PATRIC" id="fig|511145.12.peg.375"/>
<dbReference type="EchoBASE" id="EB3087"/>
<dbReference type="eggNOG" id="COG2120">
    <property type="taxonomic scope" value="Bacteria"/>
</dbReference>
<dbReference type="HOGENOM" id="CLU_049311_5_2_6"/>
<dbReference type="InParanoid" id="P71311"/>
<dbReference type="OMA" id="PDNRMDS"/>
<dbReference type="OrthoDB" id="9790023at2"/>
<dbReference type="PhylomeDB" id="P71311"/>
<dbReference type="BioCyc" id="EcoCyc:G6216-MONOMER"/>
<dbReference type="PRO" id="PR:P71311"/>
<dbReference type="Proteomes" id="UP000000625">
    <property type="component" value="Chromosome"/>
</dbReference>
<dbReference type="GO" id="GO:0016811">
    <property type="term" value="F:hydrolase activity, acting on carbon-nitrogen (but not peptide) bonds, in linear amides"/>
    <property type="evidence" value="ECO:0000318"/>
    <property type="project" value="GO_Central"/>
</dbReference>
<dbReference type="Gene3D" id="3.40.50.10320">
    <property type="entry name" value="LmbE-like"/>
    <property type="match status" value="1"/>
</dbReference>
<dbReference type="InterPro" id="IPR003737">
    <property type="entry name" value="GlcNAc_PI_deacetylase-related"/>
</dbReference>
<dbReference type="InterPro" id="IPR024078">
    <property type="entry name" value="LmbE-like_dom_sf"/>
</dbReference>
<dbReference type="PANTHER" id="PTHR12993:SF30">
    <property type="entry name" value="N-ACETYL-ALPHA-D-GLUCOSAMINYL L-MALATE DEACETYLASE 1"/>
    <property type="match status" value="1"/>
</dbReference>
<dbReference type="PANTHER" id="PTHR12993">
    <property type="entry name" value="N-ACETYLGLUCOSAMINYL-PHOSPHATIDYLINOSITOL DE-N-ACETYLASE-RELATED"/>
    <property type="match status" value="1"/>
</dbReference>
<dbReference type="Pfam" id="PF02585">
    <property type="entry name" value="PIG-L"/>
    <property type="match status" value="1"/>
</dbReference>
<dbReference type="SUPFAM" id="SSF102588">
    <property type="entry name" value="LmbE-like"/>
    <property type="match status" value="1"/>
</dbReference>
<reference key="1">
    <citation type="journal article" date="1996" name="J. Bacteriol.">
        <title>Identification of sulfate starvation-regulated genes in Escherichia coli: a gene cluster involved in the utilization of taurine as a sulfur source.</title>
        <authorList>
            <person name="van der Ploeg J.R."/>
            <person name="Weiss M.A."/>
            <person name="Saller E."/>
            <person name="Nashimoto H."/>
            <person name="Saito N."/>
            <person name="Kertesz M.A."/>
            <person name="Leisinger T."/>
        </authorList>
    </citation>
    <scope>NUCLEOTIDE SEQUENCE [GENOMIC DNA]</scope>
    <source>
        <strain>K12</strain>
    </source>
</reference>
<reference key="2">
    <citation type="submission" date="1997-01" db="EMBL/GenBank/DDBJ databases">
        <title>Sequence of minutes 4-25 of Escherichia coli.</title>
        <authorList>
            <person name="Chung E."/>
            <person name="Allen E."/>
            <person name="Araujo R."/>
            <person name="Aparicio A.M."/>
            <person name="Davis K."/>
            <person name="Duncan M."/>
            <person name="Federspiel N."/>
            <person name="Hyman R."/>
            <person name="Kalman S."/>
            <person name="Komp C."/>
            <person name="Kurdi O."/>
            <person name="Lew H."/>
            <person name="Lin D."/>
            <person name="Namath A."/>
            <person name="Oefner P."/>
            <person name="Roberts D."/>
            <person name="Schramm S."/>
            <person name="Davis R.W."/>
        </authorList>
    </citation>
    <scope>NUCLEOTIDE SEQUENCE [LARGE SCALE GENOMIC DNA]</scope>
    <source>
        <strain>K12 / MG1655 / ATCC 47076</strain>
    </source>
</reference>
<reference key="3">
    <citation type="journal article" date="1997" name="Science">
        <title>The complete genome sequence of Escherichia coli K-12.</title>
        <authorList>
            <person name="Blattner F.R."/>
            <person name="Plunkett G. III"/>
            <person name="Bloch C.A."/>
            <person name="Perna N.T."/>
            <person name="Burland V."/>
            <person name="Riley M."/>
            <person name="Collado-Vides J."/>
            <person name="Glasner J.D."/>
            <person name="Rode C.K."/>
            <person name="Mayhew G.F."/>
            <person name="Gregor J."/>
            <person name="Davis N.W."/>
            <person name="Kirkpatrick H.A."/>
            <person name="Goeden M.A."/>
            <person name="Rose D.J."/>
            <person name="Mau B."/>
            <person name="Shao Y."/>
        </authorList>
    </citation>
    <scope>NUCLEOTIDE SEQUENCE [LARGE SCALE GENOMIC DNA]</scope>
    <source>
        <strain>K12 / MG1655 / ATCC 47076</strain>
    </source>
</reference>
<reference key="4">
    <citation type="journal article" date="2006" name="Mol. Syst. Biol.">
        <title>Highly accurate genome sequences of Escherichia coli K-12 strains MG1655 and W3110.</title>
        <authorList>
            <person name="Hayashi K."/>
            <person name="Morooka N."/>
            <person name="Yamamoto Y."/>
            <person name="Fujita K."/>
            <person name="Isono K."/>
            <person name="Choi S."/>
            <person name="Ohtsubo E."/>
            <person name="Baba T."/>
            <person name="Wanner B.L."/>
            <person name="Mori H."/>
            <person name="Horiuchi T."/>
        </authorList>
    </citation>
    <scope>NUCLEOTIDE SEQUENCE [LARGE SCALE GENOMIC DNA]</scope>
    <source>
        <strain>K12 / W3110 / ATCC 27325 / DSM 5911</strain>
    </source>
</reference>
<feature type="chain" id="PRO_0000168595" description="Uncharacterized deacetylase YaiS">
    <location>
        <begin position="1"/>
        <end position="185"/>
    </location>
</feature>